<comment type="function">
    <text>Tropomyosin, in association with the troponin complex, plays a central role in the calcium dependent regulation of muscle contraction.</text>
</comment>
<comment type="subunit">
    <text evidence="1">Homodimer.</text>
</comment>
<comment type="domain">
    <text>The molecule is in a coiled coil structure that is formed by 2 polypeptide chains. The sequence exhibits a prominent seven-residues periodicity.</text>
</comment>
<comment type="similarity">
    <text evidence="3">Belongs to the tropomyosin family.</text>
</comment>
<evidence type="ECO:0000250" key="1"/>
<evidence type="ECO:0000256" key="2">
    <source>
        <dbReference type="SAM" id="MobiDB-lite"/>
    </source>
</evidence>
<evidence type="ECO:0000305" key="3"/>
<reference key="1">
    <citation type="journal article" date="2000" name="Dev. Biol.">
        <title>Genes expressed in the amphioxus notochord revealed by EST analysis.</title>
        <authorList>
            <person name="Suzuki M.M."/>
            <person name="Satoh N."/>
        </authorList>
    </citation>
    <scope>NUCLEOTIDE SEQUENCE [MRNA]</scope>
    <source>
        <tissue>Notochord</tissue>
    </source>
</reference>
<organism>
    <name type="scientific">Branchiostoma belcheri</name>
    <name type="common">Amphioxus</name>
    <dbReference type="NCBI Taxonomy" id="7741"/>
    <lineage>
        <taxon>Eukaryota</taxon>
        <taxon>Metazoa</taxon>
        <taxon>Chordata</taxon>
        <taxon>Cephalochordata</taxon>
        <taxon>Leptocardii</taxon>
        <taxon>Amphioxiformes</taxon>
        <taxon>Branchiostomatidae</taxon>
        <taxon>Branchiostoma</taxon>
    </lineage>
</organism>
<gene>
    <name type="primary">TPM</name>
</gene>
<feature type="chain" id="PRO_0000205691" description="Tropomyosin">
    <location>
        <begin position="1"/>
        <end position="284"/>
    </location>
</feature>
<feature type="region of interest" description="Disordered" evidence="2">
    <location>
        <begin position="106"/>
        <end position="134"/>
    </location>
</feature>
<feature type="region of interest" description="Disordered" evidence="2">
    <location>
        <begin position="186"/>
        <end position="221"/>
    </location>
</feature>
<feature type="coiled-coil region" evidence="1">
    <location>
        <begin position="1"/>
        <end position="284"/>
    </location>
</feature>
<feature type="compositionally biased region" description="Basic and acidic residues" evidence="2">
    <location>
        <begin position="112"/>
        <end position="134"/>
    </location>
</feature>
<feature type="compositionally biased region" description="Basic and acidic residues" evidence="2">
    <location>
        <begin position="186"/>
        <end position="198"/>
    </location>
</feature>
<dbReference type="EMBL" id="AB035663">
    <property type="protein sequence ID" value="BAA96548.1"/>
    <property type="molecule type" value="mRNA"/>
</dbReference>
<dbReference type="SMR" id="Q9NDS0"/>
<dbReference type="Proteomes" id="UP000515135">
    <property type="component" value="Unplaced"/>
</dbReference>
<dbReference type="FunFam" id="1.20.5.170:FF:000005">
    <property type="entry name" value="Tropomyosin alpha-1 chain"/>
    <property type="match status" value="1"/>
</dbReference>
<dbReference type="FunFam" id="1.20.5.170:FF:000001">
    <property type="entry name" value="Tropomyosin alpha-1 chain isoform 1"/>
    <property type="match status" value="1"/>
</dbReference>
<dbReference type="FunFam" id="1.20.5.340:FF:000001">
    <property type="entry name" value="Tropomyosin alpha-1 chain isoform 2"/>
    <property type="match status" value="1"/>
</dbReference>
<dbReference type="Gene3D" id="1.20.5.170">
    <property type="match status" value="2"/>
</dbReference>
<dbReference type="Gene3D" id="1.20.5.340">
    <property type="match status" value="1"/>
</dbReference>
<dbReference type="InterPro" id="IPR000533">
    <property type="entry name" value="Tropomyosin"/>
</dbReference>
<dbReference type="PANTHER" id="PTHR19269">
    <property type="entry name" value="TROPOMYOSIN"/>
    <property type="match status" value="1"/>
</dbReference>
<dbReference type="Pfam" id="PF00261">
    <property type="entry name" value="Tropomyosin"/>
    <property type="match status" value="1"/>
</dbReference>
<dbReference type="PRINTS" id="PR00194">
    <property type="entry name" value="TROPOMYOSIN"/>
</dbReference>
<dbReference type="SUPFAM" id="SSF57997">
    <property type="entry name" value="Tropomyosin"/>
    <property type="match status" value="1"/>
</dbReference>
<dbReference type="PROSITE" id="PS00326">
    <property type="entry name" value="TROPOMYOSIN"/>
    <property type="match status" value="1"/>
</dbReference>
<keyword id="KW-0175">Coiled coil</keyword>
<keyword id="KW-1185">Reference proteome</keyword>
<keyword id="KW-0677">Repeat</keyword>
<sequence length="284" mass="32565">MDAIKKKMLMLKNDKENALDRAEQAEQAMKDAQEKNVKLEDEINDLNKKIRMVEDELDKAQESLKEATEQLEAATKKAADAEAEVASLNRRIQLVEEELDRAQERLNSTVEKLTDSEKAADESERARKVLENRQGADEDKMELLDMQLREAKMIAEEADRKYEEVARKLVITEGDLERAEERADLAETKARELEDELKTTTGQLKSMEAQATKASEKEEAYEEQVRDLSAKLKEAETRAEFAERTVAKLEKNVDDLEDALYAEKEKYRGVSEELDQALNELHNM</sequence>
<proteinExistence type="evidence at transcript level"/>
<name>TPM_BRABE</name>
<accession>Q9NDS0</accession>
<protein>
    <recommendedName>
        <fullName>Tropomyosin</fullName>
    </recommendedName>
</protein>